<feature type="chain" id="PRO_0000225522" description="DNA-directed RNA polymerase subunit beta'">
    <location>
        <begin position="1"/>
        <end position="1152"/>
    </location>
</feature>
<feature type="binding site" evidence="1">
    <location>
        <position position="60"/>
    </location>
    <ligand>
        <name>Zn(2+)</name>
        <dbReference type="ChEBI" id="CHEBI:29105"/>
        <label>1</label>
    </ligand>
</feature>
<feature type="binding site" evidence="1">
    <location>
        <position position="62"/>
    </location>
    <ligand>
        <name>Zn(2+)</name>
        <dbReference type="ChEBI" id="CHEBI:29105"/>
        <label>1</label>
    </ligand>
</feature>
<feature type="binding site" evidence="1">
    <location>
        <position position="75"/>
    </location>
    <ligand>
        <name>Zn(2+)</name>
        <dbReference type="ChEBI" id="CHEBI:29105"/>
        <label>1</label>
    </ligand>
</feature>
<feature type="binding site" evidence="1">
    <location>
        <position position="78"/>
    </location>
    <ligand>
        <name>Zn(2+)</name>
        <dbReference type="ChEBI" id="CHEBI:29105"/>
        <label>1</label>
    </ligand>
</feature>
<feature type="binding site" evidence="1">
    <location>
        <position position="449"/>
    </location>
    <ligand>
        <name>Mg(2+)</name>
        <dbReference type="ChEBI" id="CHEBI:18420"/>
    </ligand>
</feature>
<feature type="binding site" evidence="1">
    <location>
        <position position="451"/>
    </location>
    <ligand>
        <name>Mg(2+)</name>
        <dbReference type="ChEBI" id="CHEBI:18420"/>
    </ligand>
</feature>
<feature type="binding site" evidence="1">
    <location>
        <position position="453"/>
    </location>
    <ligand>
        <name>Mg(2+)</name>
        <dbReference type="ChEBI" id="CHEBI:18420"/>
    </ligand>
</feature>
<feature type="binding site" evidence="1">
    <location>
        <position position="779"/>
    </location>
    <ligand>
        <name>Zn(2+)</name>
        <dbReference type="ChEBI" id="CHEBI:29105"/>
        <label>2</label>
    </ligand>
</feature>
<feature type="binding site" evidence="1">
    <location>
        <position position="853"/>
    </location>
    <ligand>
        <name>Zn(2+)</name>
        <dbReference type="ChEBI" id="CHEBI:29105"/>
        <label>2</label>
    </ligand>
</feature>
<feature type="binding site" evidence="1">
    <location>
        <position position="860"/>
    </location>
    <ligand>
        <name>Zn(2+)</name>
        <dbReference type="ChEBI" id="CHEBI:29105"/>
        <label>2</label>
    </ligand>
</feature>
<feature type="binding site" evidence="1">
    <location>
        <position position="863"/>
    </location>
    <ligand>
        <name>Zn(2+)</name>
        <dbReference type="ChEBI" id="CHEBI:29105"/>
        <label>2</label>
    </ligand>
</feature>
<accession>Q3A9Q8</accession>
<dbReference type="EC" id="2.7.7.6" evidence="1"/>
<dbReference type="EMBL" id="CP000141">
    <property type="protein sequence ID" value="ABB15562.1"/>
    <property type="molecule type" value="Genomic_DNA"/>
</dbReference>
<dbReference type="RefSeq" id="WP_011345199.1">
    <property type="nucleotide sequence ID" value="NC_007503.1"/>
</dbReference>
<dbReference type="SMR" id="Q3A9Q8"/>
<dbReference type="FunCoup" id="Q3A9Q8">
    <property type="interactions" value="385"/>
</dbReference>
<dbReference type="STRING" id="246194.CHY_2317"/>
<dbReference type="KEGG" id="chy:CHY_2317"/>
<dbReference type="eggNOG" id="COG0086">
    <property type="taxonomic scope" value="Bacteria"/>
</dbReference>
<dbReference type="HOGENOM" id="CLU_000524_3_1_9"/>
<dbReference type="InParanoid" id="Q3A9Q8"/>
<dbReference type="OrthoDB" id="9815296at2"/>
<dbReference type="Proteomes" id="UP000002706">
    <property type="component" value="Chromosome"/>
</dbReference>
<dbReference type="GO" id="GO:0000428">
    <property type="term" value="C:DNA-directed RNA polymerase complex"/>
    <property type="evidence" value="ECO:0007669"/>
    <property type="project" value="UniProtKB-KW"/>
</dbReference>
<dbReference type="GO" id="GO:0003677">
    <property type="term" value="F:DNA binding"/>
    <property type="evidence" value="ECO:0007669"/>
    <property type="project" value="UniProtKB-UniRule"/>
</dbReference>
<dbReference type="GO" id="GO:0003899">
    <property type="term" value="F:DNA-directed RNA polymerase activity"/>
    <property type="evidence" value="ECO:0007669"/>
    <property type="project" value="UniProtKB-UniRule"/>
</dbReference>
<dbReference type="GO" id="GO:0000287">
    <property type="term" value="F:magnesium ion binding"/>
    <property type="evidence" value="ECO:0007669"/>
    <property type="project" value="UniProtKB-UniRule"/>
</dbReference>
<dbReference type="GO" id="GO:0008270">
    <property type="term" value="F:zinc ion binding"/>
    <property type="evidence" value="ECO:0007669"/>
    <property type="project" value="UniProtKB-UniRule"/>
</dbReference>
<dbReference type="GO" id="GO:0006351">
    <property type="term" value="P:DNA-templated transcription"/>
    <property type="evidence" value="ECO:0007669"/>
    <property type="project" value="UniProtKB-UniRule"/>
</dbReference>
<dbReference type="CDD" id="cd02655">
    <property type="entry name" value="RNAP_beta'_C"/>
    <property type="match status" value="1"/>
</dbReference>
<dbReference type="CDD" id="cd01609">
    <property type="entry name" value="RNAP_beta'_N"/>
    <property type="match status" value="1"/>
</dbReference>
<dbReference type="FunFam" id="1.10.132.30:FF:000003">
    <property type="entry name" value="DNA-directed RNA polymerase subunit beta"/>
    <property type="match status" value="1"/>
</dbReference>
<dbReference type="FunFam" id="1.10.150.390:FF:000002">
    <property type="entry name" value="DNA-directed RNA polymerase subunit beta"/>
    <property type="match status" value="1"/>
</dbReference>
<dbReference type="FunFam" id="1.10.40.90:FF:000001">
    <property type="entry name" value="DNA-directed RNA polymerase subunit beta"/>
    <property type="match status" value="1"/>
</dbReference>
<dbReference type="FunFam" id="4.10.860.120:FF:000001">
    <property type="entry name" value="DNA-directed RNA polymerase subunit beta"/>
    <property type="match status" value="1"/>
</dbReference>
<dbReference type="Gene3D" id="1.10.132.30">
    <property type="match status" value="1"/>
</dbReference>
<dbReference type="Gene3D" id="1.10.150.390">
    <property type="match status" value="1"/>
</dbReference>
<dbReference type="Gene3D" id="1.10.1790.20">
    <property type="match status" value="1"/>
</dbReference>
<dbReference type="Gene3D" id="1.10.40.90">
    <property type="match status" value="1"/>
</dbReference>
<dbReference type="Gene3D" id="2.40.40.20">
    <property type="match status" value="1"/>
</dbReference>
<dbReference type="Gene3D" id="2.40.50.100">
    <property type="match status" value="1"/>
</dbReference>
<dbReference type="Gene3D" id="4.10.860.120">
    <property type="entry name" value="RNA polymerase II, clamp domain"/>
    <property type="match status" value="1"/>
</dbReference>
<dbReference type="Gene3D" id="1.10.274.100">
    <property type="entry name" value="RNA polymerase Rpb1, domain 3"/>
    <property type="match status" value="2"/>
</dbReference>
<dbReference type="HAMAP" id="MF_01322">
    <property type="entry name" value="RNApol_bact_RpoC"/>
    <property type="match status" value="1"/>
</dbReference>
<dbReference type="InterPro" id="IPR012756">
    <property type="entry name" value="DNA-dir_RpoC2_beta_pp"/>
</dbReference>
<dbReference type="InterPro" id="IPR045867">
    <property type="entry name" value="DNA-dir_RpoC_beta_prime"/>
</dbReference>
<dbReference type="InterPro" id="IPR012754">
    <property type="entry name" value="DNA-dir_RpoC_beta_prime_bact"/>
</dbReference>
<dbReference type="InterPro" id="IPR000722">
    <property type="entry name" value="RNA_pol_asu"/>
</dbReference>
<dbReference type="InterPro" id="IPR006592">
    <property type="entry name" value="RNA_pol_N"/>
</dbReference>
<dbReference type="InterPro" id="IPR007080">
    <property type="entry name" value="RNA_pol_Rpb1_1"/>
</dbReference>
<dbReference type="InterPro" id="IPR007066">
    <property type="entry name" value="RNA_pol_Rpb1_3"/>
</dbReference>
<dbReference type="InterPro" id="IPR042102">
    <property type="entry name" value="RNA_pol_Rpb1_3_sf"/>
</dbReference>
<dbReference type="InterPro" id="IPR007083">
    <property type="entry name" value="RNA_pol_Rpb1_4"/>
</dbReference>
<dbReference type="InterPro" id="IPR007081">
    <property type="entry name" value="RNA_pol_Rpb1_5"/>
</dbReference>
<dbReference type="InterPro" id="IPR044893">
    <property type="entry name" value="RNA_pol_Rpb1_clamp_domain"/>
</dbReference>
<dbReference type="InterPro" id="IPR038120">
    <property type="entry name" value="Rpb1_funnel_sf"/>
</dbReference>
<dbReference type="NCBIfam" id="NF011498">
    <property type="entry name" value="PRK14906.1"/>
    <property type="match status" value="1"/>
</dbReference>
<dbReference type="NCBIfam" id="TIGR02388">
    <property type="entry name" value="rpoC2_cyan"/>
    <property type="match status" value="1"/>
</dbReference>
<dbReference type="NCBIfam" id="TIGR02386">
    <property type="entry name" value="rpoC_TIGR"/>
    <property type="match status" value="1"/>
</dbReference>
<dbReference type="PANTHER" id="PTHR19376">
    <property type="entry name" value="DNA-DIRECTED RNA POLYMERASE"/>
    <property type="match status" value="1"/>
</dbReference>
<dbReference type="PANTHER" id="PTHR19376:SF54">
    <property type="entry name" value="DNA-DIRECTED RNA POLYMERASE SUBUNIT BETA"/>
    <property type="match status" value="1"/>
</dbReference>
<dbReference type="Pfam" id="PF04997">
    <property type="entry name" value="RNA_pol_Rpb1_1"/>
    <property type="match status" value="1"/>
</dbReference>
<dbReference type="Pfam" id="PF00623">
    <property type="entry name" value="RNA_pol_Rpb1_2"/>
    <property type="match status" value="2"/>
</dbReference>
<dbReference type="Pfam" id="PF04983">
    <property type="entry name" value="RNA_pol_Rpb1_3"/>
    <property type="match status" value="1"/>
</dbReference>
<dbReference type="Pfam" id="PF05000">
    <property type="entry name" value="RNA_pol_Rpb1_4"/>
    <property type="match status" value="1"/>
</dbReference>
<dbReference type="Pfam" id="PF04998">
    <property type="entry name" value="RNA_pol_Rpb1_5"/>
    <property type="match status" value="1"/>
</dbReference>
<dbReference type="SMART" id="SM00663">
    <property type="entry name" value="RPOLA_N"/>
    <property type="match status" value="1"/>
</dbReference>
<dbReference type="SUPFAM" id="SSF64484">
    <property type="entry name" value="beta and beta-prime subunits of DNA dependent RNA-polymerase"/>
    <property type="match status" value="1"/>
</dbReference>
<protein>
    <recommendedName>
        <fullName evidence="1">DNA-directed RNA polymerase subunit beta'</fullName>
        <shortName evidence="1">RNAP subunit beta'</shortName>
        <ecNumber evidence="1">2.7.7.6</ecNumber>
    </recommendedName>
    <alternativeName>
        <fullName evidence="1">RNA polymerase subunit beta'</fullName>
    </alternativeName>
    <alternativeName>
        <fullName evidence="1">Transcriptase subunit beta'</fullName>
    </alternativeName>
</protein>
<organism>
    <name type="scientific">Carboxydothermus hydrogenoformans (strain ATCC BAA-161 / DSM 6008 / Z-2901)</name>
    <dbReference type="NCBI Taxonomy" id="246194"/>
    <lineage>
        <taxon>Bacteria</taxon>
        <taxon>Bacillati</taxon>
        <taxon>Bacillota</taxon>
        <taxon>Clostridia</taxon>
        <taxon>Thermoanaerobacterales</taxon>
        <taxon>Thermoanaerobacteraceae</taxon>
        <taxon>Carboxydothermus</taxon>
    </lineage>
</organism>
<reference key="1">
    <citation type="journal article" date="2005" name="PLoS Genet.">
        <title>Life in hot carbon monoxide: the complete genome sequence of Carboxydothermus hydrogenoformans Z-2901.</title>
        <authorList>
            <person name="Wu M."/>
            <person name="Ren Q."/>
            <person name="Durkin A.S."/>
            <person name="Daugherty S.C."/>
            <person name="Brinkac L.M."/>
            <person name="Dodson R.J."/>
            <person name="Madupu R."/>
            <person name="Sullivan S.A."/>
            <person name="Kolonay J.F."/>
            <person name="Nelson W.C."/>
            <person name="Tallon L.J."/>
            <person name="Jones K.M."/>
            <person name="Ulrich L.E."/>
            <person name="Gonzalez J.M."/>
            <person name="Zhulin I.B."/>
            <person name="Robb F.T."/>
            <person name="Eisen J.A."/>
        </authorList>
    </citation>
    <scope>NUCLEOTIDE SEQUENCE [LARGE SCALE GENOMIC DNA]</scope>
    <source>
        <strain>ATCC BAA-161 / DSM 6008 / Z-2901</strain>
    </source>
</reference>
<gene>
    <name evidence="1" type="primary">rpoC</name>
    <name type="ordered locus">CHY_2317</name>
</gene>
<evidence type="ECO:0000255" key="1">
    <source>
        <dbReference type="HAMAP-Rule" id="MF_01322"/>
    </source>
</evidence>
<comment type="function">
    <text evidence="1">DNA-dependent RNA polymerase catalyzes the transcription of DNA into RNA using the four ribonucleoside triphosphates as substrates.</text>
</comment>
<comment type="catalytic activity">
    <reaction evidence="1">
        <text>RNA(n) + a ribonucleoside 5'-triphosphate = RNA(n+1) + diphosphate</text>
        <dbReference type="Rhea" id="RHEA:21248"/>
        <dbReference type="Rhea" id="RHEA-COMP:14527"/>
        <dbReference type="Rhea" id="RHEA-COMP:17342"/>
        <dbReference type="ChEBI" id="CHEBI:33019"/>
        <dbReference type="ChEBI" id="CHEBI:61557"/>
        <dbReference type="ChEBI" id="CHEBI:140395"/>
        <dbReference type="EC" id="2.7.7.6"/>
    </reaction>
</comment>
<comment type="cofactor">
    <cofactor evidence="1">
        <name>Mg(2+)</name>
        <dbReference type="ChEBI" id="CHEBI:18420"/>
    </cofactor>
    <text evidence="1">Binds 1 Mg(2+) ion per subunit.</text>
</comment>
<comment type="cofactor">
    <cofactor evidence="1">
        <name>Zn(2+)</name>
        <dbReference type="ChEBI" id="CHEBI:29105"/>
    </cofactor>
    <text evidence="1">Binds 2 Zn(2+) ions per subunit.</text>
</comment>
<comment type="subunit">
    <text evidence="1">The RNAP catalytic core consists of 2 alpha, 1 beta, 1 beta' and 1 omega subunit. When a sigma factor is associated with the core the holoenzyme is formed, which can initiate transcription.</text>
</comment>
<comment type="similarity">
    <text evidence="1">Belongs to the RNA polymerase beta' chain family.</text>
</comment>
<name>RPOC_CARHZ</name>
<proteinExistence type="inferred from homology"/>
<sequence length="1152" mass="129253">MLVLNNFERIKIGLASPDQIRAWSHGEVKKPETINYRTLKPERDGLFCERIFGPTKDWECHCGKYKRVRYKGVVCDRCGVEVTRSKVRRERLGHIELAAPVSHIWYFKGIPSRMGLLLDMSPRSLEKVLYFVSYIVIDPGETPLLKKQLLTETEYREAREKYGNAFKAGMGAEAIKELLAEIDLDELSAELKAEIKESTGQRRIRALRRLEVVESFRKSGNRPEWMILDVIPVIPPELRPMVQLDGGRFATSDLNDLYRRVINRNNRLKRLLELGAPDIIVRNEKRMLQEAVDALIDNGRRGRPVTGPGNRPLKSLSDMLKGKQGRFRQNLLGKRVDYSGRSVIVVGPELKLHQCGLPKEMALELFKPFVMKKLVADGIAHNIKSAKRMVERVKPEVWDVLEEVIKEHPVLLNRAPTLHRLGIQAFEPVLVEGRAIQIHPLVCTAYNADFDGDQMAVHVPLSAEAQAEARLLMLSSHNILNPKDGKPVVVPTQDMVIGSYYLTVEKPGAKGEGKKFAHPEEVIMAYEEGVIELHTKIKVRYPIRGEIVELETTPGRIIFNEVIPEELRFINHLVDKKALGKIVTESYRKLGYEKTGYLLDGLKKLGFHYATKAGLTIGIVDITVPKEKQEILEEADRMVADIEVKYRRGLITEDERYQRVVDIWNAATEKVTKKLVETLEASQFNHVYMMAKSGARGNIQQIRQLAGMRGLMADPSGRIIDLPIKANFREGLTVLEYFISTHGARKGLADTALRTADSGYLTRRLVDVCQDVIVREEDCGTEDGIYVTDVKDGTDVIEKLEDRILGRVAAEDVVHPETGELLVAKNQEITEEIAEKIVSANIKKVKIRSVLTCRTRHGVCTRCYGRNLATNSIVDIGEAVGIIAAQSIGEPGTQLTMRTFHTGGVAGEDITQGLPRVEELFEARRPKGQAIITEIDGVVEVRDNKGRREIEVINQETGERKVYPITYQARIKVQTGDKVYAGDELTEGPINPHDLIKVKGIEGAQLYLLQEVQKVYRMQGVEINDKHIEVVIRQMLRKVKIEDSGDTDLLPGSLVDIFEFEDENAKVIAKGGKPATAKRVLLGITKASLATDSFLSAASFQETTRVLTEAAIKGKVDPLLGLKENVIIGKLIPAGTGMARYRNIMVQAKNEE</sequence>
<keyword id="KW-0240">DNA-directed RNA polymerase</keyword>
<keyword id="KW-0460">Magnesium</keyword>
<keyword id="KW-0479">Metal-binding</keyword>
<keyword id="KW-0548">Nucleotidyltransferase</keyword>
<keyword id="KW-1185">Reference proteome</keyword>
<keyword id="KW-0804">Transcription</keyword>
<keyword id="KW-0808">Transferase</keyword>
<keyword id="KW-0862">Zinc</keyword>